<accession>P45815</accession>
<comment type="function">
    <text evidence="3">Transcriptional regulator involved in resistance to high copper concentration.</text>
</comment>
<comment type="subcellular location">
    <subcellularLocation>
        <location evidence="3">Nucleus</location>
    </subcellularLocation>
</comment>
<keyword id="KW-0186">Copper</keyword>
<keyword id="KW-0238">DNA-binding</keyword>
<keyword id="KW-0479">Metal-binding</keyword>
<keyword id="KW-0539">Nucleus</keyword>
<keyword id="KW-1185">Reference proteome</keyword>
<keyword id="KW-0804">Transcription</keyword>
<keyword id="KW-0805">Transcription regulation</keyword>
<keyword id="KW-0862">Zinc</keyword>
<gene>
    <name type="primary">CRF1</name>
    <name type="ordered locus">YALI0B08206g</name>
</gene>
<organism>
    <name type="scientific">Yarrowia lipolytica (strain CLIB 122 / E 150)</name>
    <name type="common">Yeast</name>
    <name type="synonym">Candida lipolytica</name>
    <dbReference type="NCBI Taxonomy" id="284591"/>
    <lineage>
        <taxon>Eukaryota</taxon>
        <taxon>Fungi</taxon>
        <taxon>Dikarya</taxon>
        <taxon>Ascomycota</taxon>
        <taxon>Saccharomycotina</taxon>
        <taxon>Dipodascomycetes</taxon>
        <taxon>Dipodascales</taxon>
        <taxon>Dipodascales incertae sedis</taxon>
        <taxon>Yarrowia</taxon>
    </lineage>
</organism>
<sequence length="411" mass="43689">MVVIEGIKYACERCIRGHRVSSCTHTQQPLIRIKPKGRPATQCLHCREARKNKALHVKCKCGSSSSKHAATCPCYSGGGCICTNKHPQVLPPNSTTTGANGCIVINKAVLDEGSQQQAQQAQQQSQSQQAQQQQQQPQPQASPILQQPQMPTPVHTTNVTTPPVATPTHSHRALSTTPSLSPQPQSPHSPESALKSVNFLGRTNSSSSLSSLHSGRNKNRIEKVRPSHNSLSAASQLANSPSSPFYAVTPPAWVDSPTLVPTGALDASYLQILNDDLSSPLLDSDVFSSLDMEPVAHSNNNHGGIPTGGSRALASTDINFDRFESTSPSSILSSWNLWGGVGGSDAPEMSVAANPSASASASSIQTPPSSNATPEWVQGQQQPCSVSPADVMLPFKRDDQESVFLTEPLYL</sequence>
<dbReference type="EMBL" id="Z23265">
    <property type="protein sequence ID" value="CAA80803.1"/>
    <property type="molecule type" value="Genomic_DNA"/>
</dbReference>
<dbReference type="EMBL" id="CR382128">
    <property type="protein sequence ID" value="CAG82873.1"/>
    <property type="molecule type" value="Genomic_DNA"/>
</dbReference>
<dbReference type="RefSeq" id="XP_500631.1">
    <property type="nucleotide sequence ID" value="XM_500631.1"/>
</dbReference>
<dbReference type="SMR" id="P45815"/>
<dbReference type="STRING" id="284591.P45815"/>
<dbReference type="EnsemblFungi" id="CAG82873">
    <property type="protein sequence ID" value="CAG82873"/>
    <property type="gene ID" value="YALI0_B08206g"/>
</dbReference>
<dbReference type="KEGG" id="yli:2907407"/>
<dbReference type="VEuPathDB" id="FungiDB:YALI0_B08206g"/>
<dbReference type="HOGENOM" id="CLU_669403_0_0_1"/>
<dbReference type="InParanoid" id="P45815"/>
<dbReference type="OrthoDB" id="27794at4891"/>
<dbReference type="Proteomes" id="UP000001300">
    <property type="component" value="Chromosome B"/>
</dbReference>
<dbReference type="GO" id="GO:0005634">
    <property type="term" value="C:nucleus"/>
    <property type="evidence" value="ECO:0000318"/>
    <property type="project" value="GO_Central"/>
</dbReference>
<dbReference type="GO" id="GO:0005507">
    <property type="term" value="F:copper ion binding"/>
    <property type="evidence" value="ECO:0000318"/>
    <property type="project" value="GO_Central"/>
</dbReference>
<dbReference type="GO" id="GO:0000981">
    <property type="term" value="F:DNA-binding transcription factor activity, RNA polymerase II-specific"/>
    <property type="evidence" value="ECO:0000318"/>
    <property type="project" value="GO_Central"/>
</dbReference>
<dbReference type="GO" id="GO:0000978">
    <property type="term" value="F:RNA polymerase II cis-regulatory region sequence-specific DNA binding"/>
    <property type="evidence" value="ECO:0000318"/>
    <property type="project" value="GO_Central"/>
</dbReference>
<dbReference type="GO" id="GO:0006878">
    <property type="term" value="P:intracellular copper ion homeostasis"/>
    <property type="evidence" value="ECO:0000318"/>
    <property type="project" value="GO_Central"/>
</dbReference>
<dbReference type="GO" id="GO:0006879">
    <property type="term" value="P:intracellular iron ion homeostasis"/>
    <property type="evidence" value="ECO:0000318"/>
    <property type="project" value="GO_Central"/>
</dbReference>
<dbReference type="GO" id="GO:0045944">
    <property type="term" value="P:positive regulation of transcription by RNA polymerase II"/>
    <property type="evidence" value="ECO:0000318"/>
    <property type="project" value="GO_Central"/>
</dbReference>
<dbReference type="FunFam" id="3.90.430.10:FF:000001">
    <property type="entry name" value="Copper fist DNA-binding protein"/>
    <property type="match status" value="1"/>
</dbReference>
<dbReference type="Gene3D" id="3.90.430.10">
    <property type="entry name" value="Copper fist DNA-binding domain"/>
    <property type="match status" value="1"/>
</dbReference>
<dbReference type="InterPro" id="IPR051763">
    <property type="entry name" value="Copper_Homeo_Regul"/>
</dbReference>
<dbReference type="InterPro" id="IPR001083">
    <property type="entry name" value="Cu_fist_DNA-bd_dom"/>
</dbReference>
<dbReference type="InterPro" id="IPR036395">
    <property type="entry name" value="Cu_fist_DNA-bd_dom_sf"/>
</dbReference>
<dbReference type="PANTHER" id="PTHR28088">
    <property type="entry name" value="TRANSCRIPTIONAL ACTIVATOR HAA1-RELATED"/>
    <property type="match status" value="1"/>
</dbReference>
<dbReference type="PANTHER" id="PTHR28088:SF5">
    <property type="entry name" value="TRANSCRIPTIONAL ACTIVATOR HAA1-RELATED"/>
    <property type="match status" value="1"/>
</dbReference>
<dbReference type="Pfam" id="PF00649">
    <property type="entry name" value="Copper-fist"/>
    <property type="match status" value="1"/>
</dbReference>
<dbReference type="PRINTS" id="PR00617">
    <property type="entry name" value="COPPERFIST"/>
</dbReference>
<dbReference type="SMART" id="SM01090">
    <property type="entry name" value="Copper-fist"/>
    <property type="match status" value="1"/>
</dbReference>
<dbReference type="SMART" id="SM00412">
    <property type="entry name" value="Cu_FIST"/>
    <property type="match status" value="1"/>
</dbReference>
<dbReference type="SUPFAM" id="SSF57879">
    <property type="entry name" value="Zinc domain conserved in yeast copper-regulated transcription factors"/>
    <property type="match status" value="1"/>
</dbReference>
<dbReference type="PROSITE" id="PS01119">
    <property type="entry name" value="COPPER_FIST_1"/>
    <property type="match status" value="1"/>
</dbReference>
<dbReference type="PROSITE" id="PS50073">
    <property type="entry name" value="COPPER_FIST_2"/>
    <property type="match status" value="1"/>
</dbReference>
<evidence type="ECO:0000255" key="1">
    <source>
        <dbReference type="PROSITE-ProRule" id="PRU00055"/>
    </source>
</evidence>
<evidence type="ECO:0000256" key="2">
    <source>
        <dbReference type="SAM" id="MobiDB-lite"/>
    </source>
</evidence>
<evidence type="ECO:0000269" key="3">
    <source>
    </source>
</evidence>
<name>CRF1_YARLI</name>
<proteinExistence type="predicted"/>
<protein>
    <recommendedName>
        <fullName>Copper resistance protein CRF1</fullName>
    </recommendedName>
    <alternativeName>
        <fullName>YlCRF1</fullName>
    </alternativeName>
</protein>
<feature type="chain" id="PRO_0000194932" description="Copper resistance protein CRF1">
    <location>
        <begin position="1"/>
        <end position="411"/>
    </location>
</feature>
<feature type="DNA-binding region" description="Copper-fist" evidence="1">
    <location>
        <begin position="1"/>
        <end position="40"/>
    </location>
</feature>
<feature type="region of interest" description="Disordered" evidence="2">
    <location>
        <begin position="115"/>
        <end position="241"/>
    </location>
</feature>
<feature type="region of interest" description="Disordered" evidence="2">
    <location>
        <begin position="348"/>
        <end position="389"/>
    </location>
</feature>
<feature type="compositionally biased region" description="Low complexity" evidence="2">
    <location>
        <begin position="115"/>
        <end position="190"/>
    </location>
</feature>
<feature type="compositionally biased region" description="Low complexity" evidence="2">
    <location>
        <begin position="205"/>
        <end position="214"/>
    </location>
</feature>
<feature type="compositionally biased region" description="Low complexity" evidence="2">
    <location>
        <begin position="227"/>
        <end position="241"/>
    </location>
</feature>
<feature type="compositionally biased region" description="Low complexity" evidence="2">
    <location>
        <begin position="350"/>
        <end position="370"/>
    </location>
</feature>
<feature type="binding site" evidence="1">
    <location>
        <position position="11"/>
    </location>
    <ligand>
        <name>Zn(2+)</name>
        <dbReference type="ChEBI" id="CHEBI:29105"/>
    </ligand>
</feature>
<feature type="binding site" evidence="1">
    <location>
        <position position="14"/>
    </location>
    <ligand>
        <name>Zn(2+)</name>
        <dbReference type="ChEBI" id="CHEBI:29105"/>
    </ligand>
</feature>
<feature type="binding site" evidence="1">
    <location>
        <position position="23"/>
    </location>
    <ligand>
        <name>Zn(2+)</name>
        <dbReference type="ChEBI" id="CHEBI:29105"/>
    </ligand>
</feature>
<feature type="binding site" evidence="1">
    <location>
        <position position="25"/>
    </location>
    <ligand>
        <name>Zn(2+)</name>
        <dbReference type="ChEBI" id="CHEBI:29105"/>
    </ligand>
</feature>
<reference key="1">
    <citation type="journal article" date="2002" name="J. Biol. Chem.">
        <title>A copper-responsive transcription factor, CRF1, mediates copper and cadmium resistance in Yarrowia lipolytica.</title>
        <authorList>
            <person name="Garcia S."/>
            <person name="Prado-Gonzalez M."/>
            <person name="Degano R."/>
            <person name="Dominguez A."/>
        </authorList>
    </citation>
    <scope>NUCLEOTIDE SEQUENCE [GENOMIC DNA]</scope>
    <scope>FUNCTION</scope>
    <scope>SUBCELLULAR LOCATION</scope>
    <source>
        <strain>ATCC 20460 / W29 / CBS 7504 / IFP29</strain>
    </source>
</reference>
<reference key="2">
    <citation type="journal article" date="2004" name="Nature">
        <title>Genome evolution in yeasts.</title>
        <authorList>
            <person name="Dujon B."/>
            <person name="Sherman D."/>
            <person name="Fischer G."/>
            <person name="Durrens P."/>
            <person name="Casaregola S."/>
            <person name="Lafontaine I."/>
            <person name="de Montigny J."/>
            <person name="Marck C."/>
            <person name="Neuveglise C."/>
            <person name="Talla E."/>
            <person name="Goffard N."/>
            <person name="Frangeul L."/>
            <person name="Aigle M."/>
            <person name="Anthouard V."/>
            <person name="Babour A."/>
            <person name="Barbe V."/>
            <person name="Barnay S."/>
            <person name="Blanchin S."/>
            <person name="Beckerich J.-M."/>
            <person name="Beyne E."/>
            <person name="Bleykasten C."/>
            <person name="Boisrame A."/>
            <person name="Boyer J."/>
            <person name="Cattolico L."/>
            <person name="Confanioleri F."/>
            <person name="de Daruvar A."/>
            <person name="Despons L."/>
            <person name="Fabre E."/>
            <person name="Fairhead C."/>
            <person name="Ferry-Dumazet H."/>
            <person name="Groppi A."/>
            <person name="Hantraye F."/>
            <person name="Hennequin C."/>
            <person name="Jauniaux N."/>
            <person name="Joyet P."/>
            <person name="Kachouri R."/>
            <person name="Kerrest A."/>
            <person name="Koszul R."/>
            <person name="Lemaire M."/>
            <person name="Lesur I."/>
            <person name="Ma L."/>
            <person name="Muller H."/>
            <person name="Nicaud J.-M."/>
            <person name="Nikolski M."/>
            <person name="Oztas S."/>
            <person name="Ozier-Kalogeropoulos O."/>
            <person name="Pellenz S."/>
            <person name="Potier S."/>
            <person name="Richard G.-F."/>
            <person name="Straub M.-L."/>
            <person name="Suleau A."/>
            <person name="Swennen D."/>
            <person name="Tekaia F."/>
            <person name="Wesolowski-Louvel M."/>
            <person name="Westhof E."/>
            <person name="Wirth B."/>
            <person name="Zeniou-Meyer M."/>
            <person name="Zivanovic Y."/>
            <person name="Bolotin-Fukuhara M."/>
            <person name="Thierry A."/>
            <person name="Bouchier C."/>
            <person name="Caudron B."/>
            <person name="Scarpelli C."/>
            <person name="Gaillardin C."/>
            <person name="Weissenbach J."/>
            <person name="Wincker P."/>
            <person name="Souciet J.-L."/>
        </authorList>
    </citation>
    <scope>NUCLEOTIDE SEQUENCE [LARGE SCALE GENOMIC DNA]</scope>
    <source>
        <strain>CLIB 122 / E 150</strain>
    </source>
</reference>